<evidence type="ECO:0000255" key="1">
    <source>
        <dbReference type="HAMAP-Rule" id="MF_00210"/>
    </source>
</evidence>
<evidence type="ECO:0000256" key="2">
    <source>
        <dbReference type="SAM" id="MobiDB-lite"/>
    </source>
</evidence>
<accession>A1T5Z3</accession>
<organism>
    <name type="scientific">Mycolicibacterium vanbaalenii (strain DSM 7251 / JCM 13017 / BCRC 16820 / KCTC 9966 / NRRL B-24157 / PYR-1)</name>
    <name type="common">Mycobacterium vanbaalenii</name>
    <dbReference type="NCBI Taxonomy" id="350058"/>
    <lineage>
        <taxon>Bacteria</taxon>
        <taxon>Bacillati</taxon>
        <taxon>Actinomycetota</taxon>
        <taxon>Actinomycetes</taxon>
        <taxon>Mycobacteriales</taxon>
        <taxon>Mycobacteriaceae</taxon>
        <taxon>Mycolicibacterium</taxon>
    </lineage>
</organism>
<name>AROA_MYCVP</name>
<feature type="chain" id="PRO_1000099729" description="3-phosphoshikimate 1-carboxyvinyltransferase">
    <location>
        <begin position="1"/>
        <end position="446"/>
    </location>
</feature>
<feature type="region of interest" description="Disordered" evidence="2">
    <location>
        <begin position="1"/>
        <end position="20"/>
    </location>
</feature>
<feature type="active site" description="Proton acceptor" evidence="1">
    <location>
        <position position="315"/>
    </location>
</feature>
<feature type="binding site" evidence="1">
    <location>
        <position position="23"/>
    </location>
    <ligand>
        <name>3-phosphoshikimate</name>
        <dbReference type="ChEBI" id="CHEBI:145989"/>
    </ligand>
</feature>
<feature type="binding site" evidence="1">
    <location>
        <position position="23"/>
    </location>
    <ligand>
        <name>phosphoenolpyruvate</name>
        <dbReference type="ChEBI" id="CHEBI:58702"/>
    </ligand>
</feature>
<feature type="binding site" evidence="1">
    <location>
        <position position="24"/>
    </location>
    <ligand>
        <name>3-phosphoshikimate</name>
        <dbReference type="ChEBI" id="CHEBI:145989"/>
    </ligand>
</feature>
<feature type="binding site" evidence="1">
    <location>
        <position position="28"/>
    </location>
    <ligand>
        <name>3-phosphoshikimate</name>
        <dbReference type="ChEBI" id="CHEBI:145989"/>
    </ligand>
</feature>
<feature type="binding site" evidence="1">
    <location>
        <position position="100"/>
    </location>
    <ligand>
        <name>phosphoenolpyruvate</name>
        <dbReference type="ChEBI" id="CHEBI:58702"/>
    </ligand>
</feature>
<feature type="binding site" evidence="1">
    <location>
        <position position="128"/>
    </location>
    <ligand>
        <name>phosphoenolpyruvate</name>
        <dbReference type="ChEBI" id="CHEBI:58702"/>
    </ligand>
</feature>
<feature type="binding site" evidence="1">
    <location>
        <position position="171"/>
    </location>
    <ligand>
        <name>3-phosphoshikimate</name>
        <dbReference type="ChEBI" id="CHEBI:145989"/>
    </ligand>
</feature>
<feature type="binding site" evidence="1">
    <location>
        <position position="172"/>
    </location>
    <ligand>
        <name>3-phosphoshikimate</name>
        <dbReference type="ChEBI" id="CHEBI:145989"/>
    </ligand>
</feature>
<feature type="binding site" evidence="1">
    <location>
        <position position="173"/>
    </location>
    <ligand>
        <name>3-phosphoshikimate</name>
        <dbReference type="ChEBI" id="CHEBI:145989"/>
    </ligand>
</feature>
<feature type="binding site" evidence="1">
    <location>
        <position position="173"/>
    </location>
    <ligand>
        <name>phosphoenolpyruvate</name>
        <dbReference type="ChEBI" id="CHEBI:58702"/>
    </ligand>
</feature>
<feature type="binding site" evidence="1">
    <location>
        <position position="200"/>
    </location>
    <ligand>
        <name>3-phosphoshikimate</name>
        <dbReference type="ChEBI" id="CHEBI:145989"/>
    </ligand>
</feature>
<feature type="binding site" evidence="1">
    <location>
        <position position="315"/>
    </location>
    <ligand>
        <name>3-phosphoshikimate</name>
        <dbReference type="ChEBI" id="CHEBI:145989"/>
    </ligand>
</feature>
<feature type="binding site" evidence="1">
    <location>
        <position position="344"/>
    </location>
    <ligand>
        <name>3-phosphoshikimate</name>
        <dbReference type="ChEBI" id="CHEBI:145989"/>
    </ligand>
</feature>
<feature type="binding site" evidence="1">
    <location>
        <position position="348"/>
    </location>
    <ligand>
        <name>phosphoenolpyruvate</name>
        <dbReference type="ChEBI" id="CHEBI:58702"/>
    </ligand>
</feature>
<feature type="binding site" evidence="1">
    <location>
        <position position="389"/>
    </location>
    <ligand>
        <name>phosphoenolpyruvate</name>
        <dbReference type="ChEBI" id="CHEBI:58702"/>
    </ligand>
</feature>
<feature type="binding site" evidence="1">
    <location>
        <position position="414"/>
    </location>
    <ligand>
        <name>phosphoenolpyruvate</name>
        <dbReference type="ChEBI" id="CHEBI:58702"/>
    </ligand>
</feature>
<gene>
    <name evidence="1" type="primary">aroA</name>
    <name type="ordered locus">Mvan_1771</name>
</gene>
<sequence length="446" mass="45498">MSTWPAPSTATPVHATVTVPGSKSQTNRALVLAALAVPQGSSTISGALRSRDTDLMISALQGLGVVVEAPDTDGSDGTELTVSGALAPKAGARIDCGLAGTVLRFVPPVAALTTETVTFDGDEQARARPIAPLLDGLRALGVAIDGDGLPFSVRGQGSVRGGTVEIDASGSSQFVSGLLLSGAAFTEGLTVVHTGGAVPSAPHIAMTVSMLRDAGVEVDDSAADRWRVAPGPIAARHWAVEPDLSNAVPFLAAAVISGGTVRVTGWPTVSTQPAATILSLLTSLGSEVRQGNSHLEVQGATSYDGIDVDLRDVGELAPSVAAMAALASPGSVSRLRGIAHLRGHETDRLAALSAELNRLGGQCEETDDGLVITARQMHGGVWRSYADHRMATAGAIVGLRVPGVEVEDIGTTAKTLPDFPQLWADMLAGQTDLQAGAPHAGRNQGR</sequence>
<comment type="function">
    <text evidence="1">Catalyzes the transfer of the enolpyruvyl moiety of phosphoenolpyruvate (PEP) to the 5-hydroxyl of shikimate-3-phosphate (S3P) to produce enolpyruvyl shikimate-3-phosphate and inorganic phosphate.</text>
</comment>
<comment type="catalytic activity">
    <reaction evidence="1">
        <text>3-phosphoshikimate + phosphoenolpyruvate = 5-O-(1-carboxyvinyl)-3-phosphoshikimate + phosphate</text>
        <dbReference type="Rhea" id="RHEA:21256"/>
        <dbReference type="ChEBI" id="CHEBI:43474"/>
        <dbReference type="ChEBI" id="CHEBI:57701"/>
        <dbReference type="ChEBI" id="CHEBI:58702"/>
        <dbReference type="ChEBI" id="CHEBI:145989"/>
        <dbReference type="EC" id="2.5.1.19"/>
    </reaction>
    <physiologicalReaction direction="left-to-right" evidence="1">
        <dbReference type="Rhea" id="RHEA:21257"/>
    </physiologicalReaction>
</comment>
<comment type="pathway">
    <text evidence="1">Metabolic intermediate biosynthesis; chorismate biosynthesis; chorismate from D-erythrose 4-phosphate and phosphoenolpyruvate: step 6/7.</text>
</comment>
<comment type="subunit">
    <text evidence="1">Monomer.</text>
</comment>
<comment type="subcellular location">
    <subcellularLocation>
        <location evidence="1">Cytoplasm</location>
    </subcellularLocation>
</comment>
<comment type="similarity">
    <text evidence="1">Belongs to the EPSP synthase family.</text>
</comment>
<reference key="1">
    <citation type="submission" date="2006-12" db="EMBL/GenBank/DDBJ databases">
        <title>Complete sequence of Mycobacterium vanbaalenii PYR-1.</title>
        <authorList>
            <consortium name="US DOE Joint Genome Institute"/>
            <person name="Copeland A."/>
            <person name="Lucas S."/>
            <person name="Lapidus A."/>
            <person name="Barry K."/>
            <person name="Detter J.C."/>
            <person name="Glavina del Rio T."/>
            <person name="Hammon N."/>
            <person name="Israni S."/>
            <person name="Dalin E."/>
            <person name="Tice H."/>
            <person name="Pitluck S."/>
            <person name="Singan V."/>
            <person name="Schmutz J."/>
            <person name="Larimer F."/>
            <person name="Land M."/>
            <person name="Hauser L."/>
            <person name="Kyrpides N."/>
            <person name="Anderson I.J."/>
            <person name="Miller C."/>
            <person name="Richardson P."/>
        </authorList>
    </citation>
    <scope>NUCLEOTIDE SEQUENCE [LARGE SCALE GENOMIC DNA]</scope>
    <source>
        <strain>DSM 7251 / JCM 13017 / BCRC 16820 / KCTC 9966 / NRRL B-24157 / PYR-1</strain>
    </source>
</reference>
<dbReference type="EC" id="2.5.1.19" evidence="1"/>
<dbReference type="EMBL" id="CP000511">
    <property type="protein sequence ID" value="ABM12593.1"/>
    <property type="molecule type" value="Genomic_DNA"/>
</dbReference>
<dbReference type="RefSeq" id="WP_011779012.1">
    <property type="nucleotide sequence ID" value="NC_008726.1"/>
</dbReference>
<dbReference type="SMR" id="A1T5Z3"/>
<dbReference type="STRING" id="350058.Mvan_1771"/>
<dbReference type="KEGG" id="mva:Mvan_1771"/>
<dbReference type="eggNOG" id="COG0128">
    <property type="taxonomic scope" value="Bacteria"/>
</dbReference>
<dbReference type="HOGENOM" id="CLU_024321_0_0_11"/>
<dbReference type="UniPathway" id="UPA00053">
    <property type="reaction ID" value="UER00089"/>
</dbReference>
<dbReference type="Proteomes" id="UP000009159">
    <property type="component" value="Chromosome"/>
</dbReference>
<dbReference type="GO" id="GO:0005737">
    <property type="term" value="C:cytoplasm"/>
    <property type="evidence" value="ECO:0007669"/>
    <property type="project" value="UniProtKB-SubCell"/>
</dbReference>
<dbReference type="GO" id="GO:0003866">
    <property type="term" value="F:3-phosphoshikimate 1-carboxyvinyltransferase activity"/>
    <property type="evidence" value="ECO:0007669"/>
    <property type="project" value="UniProtKB-UniRule"/>
</dbReference>
<dbReference type="GO" id="GO:0008652">
    <property type="term" value="P:amino acid biosynthetic process"/>
    <property type="evidence" value="ECO:0007669"/>
    <property type="project" value="UniProtKB-KW"/>
</dbReference>
<dbReference type="GO" id="GO:0009073">
    <property type="term" value="P:aromatic amino acid family biosynthetic process"/>
    <property type="evidence" value="ECO:0007669"/>
    <property type="project" value="UniProtKB-KW"/>
</dbReference>
<dbReference type="GO" id="GO:0009423">
    <property type="term" value="P:chorismate biosynthetic process"/>
    <property type="evidence" value="ECO:0007669"/>
    <property type="project" value="UniProtKB-UniRule"/>
</dbReference>
<dbReference type="CDD" id="cd01556">
    <property type="entry name" value="EPSP_synthase"/>
    <property type="match status" value="1"/>
</dbReference>
<dbReference type="FunFam" id="3.65.10.10:FF:000010">
    <property type="entry name" value="3-phosphoshikimate 1-carboxyvinyltransferase"/>
    <property type="match status" value="1"/>
</dbReference>
<dbReference type="FunFam" id="3.65.10.10:FF:000011">
    <property type="entry name" value="3-phosphoshikimate 1-carboxyvinyltransferase"/>
    <property type="match status" value="1"/>
</dbReference>
<dbReference type="Gene3D" id="3.65.10.10">
    <property type="entry name" value="Enolpyruvate transferase domain"/>
    <property type="match status" value="2"/>
</dbReference>
<dbReference type="HAMAP" id="MF_00210">
    <property type="entry name" value="EPSP_synth"/>
    <property type="match status" value="1"/>
</dbReference>
<dbReference type="InterPro" id="IPR001986">
    <property type="entry name" value="Enolpyruvate_Tfrase_dom"/>
</dbReference>
<dbReference type="InterPro" id="IPR036968">
    <property type="entry name" value="Enolpyruvate_Tfrase_sf"/>
</dbReference>
<dbReference type="InterPro" id="IPR006264">
    <property type="entry name" value="EPSP_synthase"/>
</dbReference>
<dbReference type="InterPro" id="IPR023193">
    <property type="entry name" value="EPSP_synthase_CS"/>
</dbReference>
<dbReference type="InterPro" id="IPR013792">
    <property type="entry name" value="RNA3'P_cycl/enolpyr_Trfase_a/b"/>
</dbReference>
<dbReference type="NCBIfam" id="TIGR01356">
    <property type="entry name" value="aroA"/>
    <property type="match status" value="1"/>
</dbReference>
<dbReference type="PANTHER" id="PTHR21090">
    <property type="entry name" value="AROM/DEHYDROQUINATE SYNTHASE"/>
    <property type="match status" value="1"/>
</dbReference>
<dbReference type="PANTHER" id="PTHR21090:SF5">
    <property type="entry name" value="PENTAFUNCTIONAL AROM POLYPEPTIDE"/>
    <property type="match status" value="1"/>
</dbReference>
<dbReference type="Pfam" id="PF00275">
    <property type="entry name" value="EPSP_synthase"/>
    <property type="match status" value="1"/>
</dbReference>
<dbReference type="PIRSF" id="PIRSF000505">
    <property type="entry name" value="EPSPS"/>
    <property type="match status" value="1"/>
</dbReference>
<dbReference type="SUPFAM" id="SSF55205">
    <property type="entry name" value="EPT/RTPC-like"/>
    <property type="match status" value="1"/>
</dbReference>
<dbReference type="PROSITE" id="PS00104">
    <property type="entry name" value="EPSP_SYNTHASE_1"/>
    <property type="match status" value="1"/>
</dbReference>
<dbReference type="PROSITE" id="PS00885">
    <property type="entry name" value="EPSP_SYNTHASE_2"/>
    <property type="match status" value="1"/>
</dbReference>
<proteinExistence type="inferred from homology"/>
<protein>
    <recommendedName>
        <fullName evidence="1">3-phosphoshikimate 1-carboxyvinyltransferase</fullName>
        <ecNumber evidence="1">2.5.1.19</ecNumber>
    </recommendedName>
    <alternativeName>
        <fullName evidence="1">5-enolpyruvylshikimate-3-phosphate synthase</fullName>
        <shortName evidence="1">EPSP synthase</shortName>
        <shortName evidence="1">EPSPS</shortName>
    </alternativeName>
</protein>
<keyword id="KW-0028">Amino-acid biosynthesis</keyword>
<keyword id="KW-0057">Aromatic amino acid biosynthesis</keyword>
<keyword id="KW-0963">Cytoplasm</keyword>
<keyword id="KW-0808">Transferase</keyword>